<gene>
    <name type="primary">POTED</name>
    <name type="synonym">A26B3</name>
    <name type="synonym">ANKRD21</name>
    <name type="synonym">POTE</name>
</gene>
<feature type="chain" id="PRO_0000066913" description="POTE ankyrin domain family member D">
    <location>
        <begin position="1"/>
        <end position="584"/>
    </location>
</feature>
<feature type="repeat" description="ANK 1">
    <location>
        <begin position="172"/>
        <end position="201"/>
    </location>
</feature>
<feature type="repeat" description="ANK 2">
    <location>
        <begin position="205"/>
        <end position="234"/>
    </location>
</feature>
<feature type="repeat" description="ANK 3">
    <location>
        <begin position="238"/>
        <end position="267"/>
    </location>
</feature>
<feature type="repeat" description="ANK 4">
    <location>
        <begin position="271"/>
        <end position="300"/>
    </location>
</feature>
<feature type="repeat" description="ANK 5">
    <location>
        <begin position="304"/>
        <end position="333"/>
    </location>
</feature>
<feature type="repeat" description="ANK 6">
    <location>
        <begin position="337"/>
        <end position="366"/>
    </location>
</feature>
<feature type="region of interest" description="Disordered" evidence="2">
    <location>
        <begin position="369"/>
        <end position="502"/>
    </location>
</feature>
<feature type="coiled-coil region" evidence="1">
    <location>
        <begin position="494"/>
        <end position="583"/>
    </location>
</feature>
<feature type="compositionally biased region" description="Basic and acidic residues" evidence="2">
    <location>
        <begin position="377"/>
        <end position="392"/>
    </location>
</feature>
<feature type="compositionally biased region" description="Basic and acidic residues" evidence="2">
    <location>
        <begin position="401"/>
        <end position="412"/>
    </location>
</feature>
<feature type="compositionally biased region" description="Basic and acidic residues" evidence="2">
    <location>
        <begin position="466"/>
        <end position="481"/>
    </location>
</feature>
<feature type="compositionally biased region" description="Polar residues" evidence="2">
    <location>
        <begin position="482"/>
        <end position="498"/>
    </location>
</feature>
<feature type="sequence variant" id="VAR_016242" description="In dbSNP:rs6517869." evidence="3">
    <original>G</original>
    <variation>S</variation>
    <location>
        <position position="113"/>
    </location>
</feature>
<feature type="sequence variant" id="VAR_016243" description="In dbSNP:rs6517870." evidence="3">
    <original>I</original>
    <variation>V</variation>
    <location>
        <position position="135"/>
    </location>
</feature>
<feature type="sequence variant" id="VAR_064765" description="In dbSNP:rs1429512928." evidence="5">
    <original>E</original>
    <variation>Q</variation>
    <location>
        <position position="172"/>
    </location>
</feature>
<feature type="sequence conflict" description="In Ref. 1; AAO23914." evidence="6" ref="1">
    <original>M</original>
    <variation>V</variation>
    <location>
        <position position="535"/>
    </location>
</feature>
<reference key="1">
    <citation type="journal article" date="2002" name="Proc. Natl. Acad. Sci. U.S.A.">
        <title>POTE, a highly homologous gene family located on numerous chromosomes and expressed in prostate, ovary, testis, placenta, and prostate cancer.</title>
        <authorList>
            <person name="Bera T.K."/>
            <person name="Zimonjic D.B."/>
            <person name="Popescu N.C."/>
            <person name="Sathyanarayana B.K."/>
            <person name="Kumar V."/>
            <person name="Lee B."/>
            <person name="Pastan I."/>
        </authorList>
    </citation>
    <scope>NUCLEOTIDE SEQUENCE [MRNA]</scope>
    <scope>TISSUE SPECIFICITY</scope>
    <scope>SUBCELLULAR LOCATION</scope>
    <scope>VARIANTS SER-113 AND VAL-135</scope>
    <source>
        <tissue>Prostate</tissue>
    </source>
</reference>
<reference key="2">
    <citation type="journal article" date="2003" name="Proc. Natl. Acad. Sci. U.S.A.">
        <authorList>
            <person name="Bera T.K."/>
            <person name="Zimonjic D.B."/>
            <person name="Popescu N.C."/>
            <person name="Sathyanarayana B.K."/>
            <person name="Kumar V."/>
            <person name="Lee B."/>
            <person name="Pastan I."/>
        </authorList>
    </citation>
    <scope>ERRATUM OF PUBMED:12475935</scope>
</reference>
<reference key="3">
    <citation type="journal article" date="2000" name="Nature">
        <title>The DNA sequence of human chromosome 21.</title>
        <authorList>
            <person name="Hattori M."/>
            <person name="Fujiyama A."/>
            <person name="Taylor T.D."/>
            <person name="Watanabe H."/>
            <person name="Yada T."/>
            <person name="Park H.-S."/>
            <person name="Toyoda A."/>
            <person name="Ishii K."/>
            <person name="Totoki Y."/>
            <person name="Choi D.-K."/>
            <person name="Groner Y."/>
            <person name="Soeda E."/>
            <person name="Ohki M."/>
            <person name="Takagi T."/>
            <person name="Sakaki Y."/>
            <person name="Taudien S."/>
            <person name="Blechschmidt K."/>
            <person name="Polley A."/>
            <person name="Menzel U."/>
            <person name="Delabar J."/>
            <person name="Kumpf K."/>
            <person name="Lehmann R."/>
            <person name="Patterson D."/>
            <person name="Reichwald K."/>
            <person name="Rump A."/>
            <person name="Schillhabel M."/>
            <person name="Schudy A."/>
            <person name="Zimmermann W."/>
            <person name="Rosenthal A."/>
            <person name="Kudoh J."/>
            <person name="Shibuya K."/>
            <person name="Kawasaki K."/>
            <person name="Asakawa S."/>
            <person name="Shintani A."/>
            <person name="Sasaki T."/>
            <person name="Nagamine K."/>
            <person name="Mitsuyama S."/>
            <person name="Antonarakis S.E."/>
            <person name="Minoshima S."/>
            <person name="Shimizu N."/>
            <person name="Nordsiek G."/>
            <person name="Hornischer K."/>
            <person name="Brandt P."/>
            <person name="Scharfe M."/>
            <person name="Schoen O."/>
            <person name="Desario A."/>
            <person name="Reichelt J."/>
            <person name="Kauer G."/>
            <person name="Bloecker H."/>
            <person name="Ramser J."/>
            <person name="Beck A."/>
            <person name="Klages S."/>
            <person name="Hennig S."/>
            <person name="Riesselmann L."/>
            <person name="Dagand E."/>
            <person name="Wehrmeyer S."/>
            <person name="Borzym K."/>
            <person name="Gardiner K."/>
            <person name="Nizetic D."/>
            <person name="Francis F."/>
            <person name="Lehrach H."/>
            <person name="Reinhardt R."/>
            <person name="Yaspo M.-L."/>
        </authorList>
    </citation>
    <scope>NUCLEOTIDE SEQUENCE [LARGE SCALE GENOMIC DNA]</scope>
</reference>
<reference key="4">
    <citation type="journal article" date="2004" name="Gene">
        <title>Five POTE paralogs and their splice variants are expressed in human prostate and encode proteins of different lengths.</title>
        <authorList>
            <person name="Bera T.K."/>
            <person name="Huynh N."/>
            <person name="Maeda H."/>
            <person name="Sathyanarayana B.K."/>
            <person name="Lee B."/>
            <person name="Pastan I."/>
        </authorList>
    </citation>
    <scope>SUBCELLULAR LOCATION</scope>
</reference>
<reference key="5">
    <citation type="journal article" date="2011" name="Nature">
        <title>Exome sequencing identifies frequent mutation of the SWI/SNF complex gene PBRM1 in renal carcinoma.</title>
        <authorList>
            <person name="Varela I."/>
            <person name="Tarpey P."/>
            <person name="Raine K."/>
            <person name="Huang D."/>
            <person name="Ong C.K."/>
            <person name="Stephens P."/>
            <person name="Davies H."/>
            <person name="Jones D."/>
            <person name="Lin M.L."/>
            <person name="Teague J."/>
            <person name="Bignell G."/>
            <person name="Butler A."/>
            <person name="Cho J."/>
            <person name="Dalgliesh G.L."/>
            <person name="Galappaththige D."/>
            <person name="Greenman C."/>
            <person name="Hardy C."/>
            <person name="Jia M."/>
            <person name="Latimer C."/>
            <person name="Lau K.W."/>
            <person name="Marshall J."/>
            <person name="McLaren S."/>
            <person name="Menzies A."/>
            <person name="Mudie L."/>
            <person name="Stebbings L."/>
            <person name="Largaespada D.A."/>
            <person name="Wessels L.F.A."/>
            <person name="Richard S."/>
            <person name="Kahnoski R.J."/>
            <person name="Anema J."/>
            <person name="Tuveson D.A."/>
            <person name="Perez-Mancera P.A."/>
            <person name="Mustonen V."/>
            <person name="Fischer A."/>
            <person name="Adams D.J."/>
            <person name="Rust A."/>
            <person name="Chan-On W."/>
            <person name="Subimerb C."/>
            <person name="Dykema K."/>
            <person name="Furge K."/>
            <person name="Campbell P.J."/>
            <person name="Teh B.T."/>
            <person name="Stratton M.R."/>
            <person name="Futreal P.A."/>
        </authorList>
    </citation>
    <scope>VARIANT GLN-172</scope>
</reference>
<name>POTED_HUMAN</name>
<keyword id="KW-0040">ANK repeat</keyword>
<keyword id="KW-1003">Cell membrane</keyword>
<keyword id="KW-0175">Coiled coil</keyword>
<keyword id="KW-0472">Membrane</keyword>
<keyword id="KW-1185">Reference proteome</keyword>
<keyword id="KW-0677">Repeat</keyword>
<protein>
    <recommendedName>
        <fullName>POTE ankyrin domain family member D</fullName>
    </recommendedName>
    <alternativeName>
        <fullName>ANKRD26-like family B member 3</fullName>
    </alternativeName>
    <alternativeName>
        <fullName>Ankyrin repeat domain-containing protein 21</fullName>
    </alternativeName>
    <alternativeName>
        <fullName>Prostate, ovary, testis-expressed protein</fullName>
        <shortName>Protein POTE</shortName>
    </alternativeName>
</protein>
<proteinExistence type="evidence at transcript level"/>
<sequence>MVAEVCSMPTASTVKKPFDLRSKMGKWCHHRFPCCRGSGKSNMGTSGDHDDSFMKMLRSKMGKCCRHCFPCCRGSGTSNVGTSGDHENSFMKMLRSKMGKWCCHCFPCCRGSGKSNVGAWGDYDHSAFMEPRYHIRREDLDKLHRAAWWGKVPRKDLIVMLRDTDMNKRDKEKRTALHLASANGNSEVVQLLLDRRCQLNVLDNKKRTALIKAIQCQEDECVLMLLEHGADRNIPDEYGNTALHYAIYNEDKLMAKALLLYGADIESKNKCGLTPLLLGVHEQKQQVVKFLIKKKANLNVLDRYGRTALILAVCCGSASIVNLLLEQNVDVSSQDLSGQTAREYAVSSHHHVICELLSDYKEKQMLKISSENSNPEQDLKLTSEEESQRLKVSENSQPEKMSQEPEINKDCDREVEEEIKKHGSNPVGLPENLTNGASAGNGDDGLIPQRRSRKPENQQFPDTENEEYHSDEQNDTRKQLSEEQNTGISQDEILTNKQKQIEVAEQKMNSELSLSHKKEEDLLRENSVLQEEIAMLRLELDETKHQNQLRENKILEEIESVKEKTDKLLRAMQLNEEALTKTNI</sequence>
<comment type="subcellular location">
    <subcellularLocation>
        <location evidence="3 4">Cell membrane</location>
        <topology evidence="3 4">Peripheral membrane protein</topology>
    </subcellularLocation>
</comment>
<comment type="tissue specificity">
    <text evidence="3">Expressed in prostate, ovary, testis, placenta and prostate cancer cell lines. Localizes to basal and terminal prostate epithelial cells.</text>
</comment>
<comment type="similarity">
    <text evidence="6">Belongs to the POTE family.</text>
</comment>
<organism>
    <name type="scientific">Homo sapiens</name>
    <name type="common">Human</name>
    <dbReference type="NCBI Taxonomy" id="9606"/>
    <lineage>
        <taxon>Eukaryota</taxon>
        <taxon>Metazoa</taxon>
        <taxon>Chordata</taxon>
        <taxon>Craniata</taxon>
        <taxon>Vertebrata</taxon>
        <taxon>Euteleostomi</taxon>
        <taxon>Mammalia</taxon>
        <taxon>Eutheria</taxon>
        <taxon>Euarchontoglires</taxon>
        <taxon>Primates</taxon>
        <taxon>Haplorrhini</taxon>
        <taxon>Catarrhini</taxon>
        <taxon>Hominidae</taxon>
        <taxon>Homo</taxon>
    </lineage>
</organism>
<dbReference type="EMBL" id="AY172978">
    <property type="protein sequence ID" value="AAO23914.1"/>
    <property type="molecule type" value="mRNA"/>
</dbReference>
<dbReference type="EMBL" id="AP001465">
    <property type="status" value="NOT_ANNOTATED_CDS"/>
    <property type="molecule type" value="Genomic_DNA"/>
</dbReference>
<dbReference type="CCDS" id="CCDS13562.1"/>
<dbReference type="RefSeq" id="NP_001244291.1">
    <property type="nucleotide sequence ID" value="NM_001257362.1"/>
</dbReference>
<dbReference type="RefSeq" id="NP_778146.2">
    <property type="nucleotide sequence ID" value="NM_174981.6"/>
</dbReference>
<dbReference type="SMR" id="Q86YR6"/>
<dbReference type="BioGRID" id="130460">
    <property type="interactions" value="7"/>
</dbReference>
<dbReference type="FunCoup" id="Q86YR6">
    <property type="interactions" value="23"/>
</dbReference>
<dbReference type="IntAct" id="Q86YR6">
    <property type="interactions" value="2"/>
</dbReference>
<dbReference type="STRING" id="9606.ENSP00000299443"/>
<dbReference type="iPTMnet" id="Q86YR6"/>
<dbReference type="PhosphoSitePlus" id="Q86YR6"/>
<dbReference type="SwissPalm" id="Q86YR6"/>
<dbReference type="BioMuta" id="POTED"/>
<dbReference type="DMDM" id="269849632"/>
<dbReference type="jPOST" id="Q86YR6"/>
<dbReference type="MassIVE" id="Q86YR6"/>
<dbReference type="PaxDb" id="9606-ENSP00000299443"/>
<dbReference type="PeptideAtlas" id="Q86YR6"/>
<dbReference type="ProteomicsDB" id="70456"/>
<dbReference type="Antibodypedia" id="22148">
    <property type="antibodies" value="78 antibodies from 17 providers"/>
</dbReference>
<dbReference type="DNASU" id="317754"/>
<dbReference type="Ensembl" id="ENST00000299443.6">
    <property type="protein sequence ID" value="ENSP00000299443.5"/>
    <property type="gene ID" value="ENSG00000166351.11"/>
</dbReference>
<dbReference type="GeneID" id="100288966"/>
<dbReference type="GeneID" id="317754"/>
<dbReference type="KEGG" id="hsa:100288966"/>
<dbReference type="KEGG" id="hsa:317754"/>
<dbReference type="MANE-Select" id="ENST00000299443.6">
    <property type="protein sequence ID" value="ENSP00000299443.5"/>
    <property type="RefSeq nucleotide sequence ID" value="NM_174981.6"/>
    <property type="RefSeq protein sequence ID" value="NP_778146.2"/>
</dbReference>
<dbReference type="UCSC" id="uc002yjb.1">
    <property type="organism name" value="human"/>
</dbReference>
<dbReference type="AGR" id="HGNC:23822"/>
<dbReference type="CTD" id="317754"/>
<dbReference type="DisGeNET" id="100288966"/>
<dbReference type="DisGeNET" id="317754"/>
<dbReference type="GeneCards" id="POTED"/>
<dbReference type="HGNC" id="HGNC:23822">
    <property type="gene designation" value="POTED"/>
</dbReference>
<dbReference type="HPA" id="ENSG00000166351">
    <property type="expression patterns" value="Tissue enriched (testis)"/>
</dbReference>
<dbReference type="MIM" id="607549">
    <property type="type" value="gene"/>
</dbReference>
<dbReference type="neXtProt" id="NX_Q86YR6"/>
<dbReference type="OpenTargets" id="ENSG00000166351"/>
<dbReference type="PharmGKB" id="PA164724756"/>
<dbReference type="VEuPathDB" id="HostDB:ENSG00000166351"/>
<dbReference type="eggNOG" id="KOG0676">
    <property type="taxonomic scope" value="Eukaryota"/>
</dbReference>
<dbReference type="GeneTree" id="ENSGT00940000163068"/>
<dbReference type="HOGENOM" id="CLU_000134_9_2_1"/>
<dbReference type="InParanoid" id="Q86YR6"/>
<dbReference type="OMA" id="HEACIEG"/>
<dbReference type="OrthoDB" id="9537854at2759"/>
<dbReference type="PAN-GO" id="Q86YR6">
    <property type="GO annotations" value="0 GO annotations based on evolutionary models"/>
</dbReference>
<dbReference type="PhylomeDB" id="Q86YR6"/>
<dbReference type="TreeFam" id="TF337879"/>
<dbReference type="PathwayCommons" id="Q86YR6"/>
<dbReference type="SignaLink" id="Q86YR6"/>
<dbReference type="BioGRID-ORCS" id="100288966">
    <property type="hits" value="1 hit in 10 CRISPR screens"/>
</dbReference>
<dbReference type="BioGRID-ORCS" id="317754">
    <property type="hits" value="43 hits in 1044 CRISPR screens"/>
</dbReference>
<dbReference type="Pharos" id="Q86YR6">
    <property type="development level" value="Tbio"/>
</dbReference>
<dbReference type="PRO" id="PR:Q86YR6"/>
<dbReference type="Proteomes" id="UP000005640">
    <property type="component" value="Chromosome 21"/>
</dbReference>
<dbReference type="RNAct" id="Q86YR6">
    <property type="molecule type" value="protein"/>
</dbReference>
<dbReference type="Bgee" id="ENSG00000166351">
    <property type="expression patterns" value="Expressed in male germ line stem cell (sensu Vertebrata) in testis and 2 other cell types or tissues"/>
</dbReference>
<dbReference type="ExpressionAtlas" id="Q86YR6">
    <property type="expression patterns" value="baseline and differential"/>
</dbReference>
<dbReference type="GO" id="GO:0005886">
    <property type="term" value="C:plasma membrane"/>
    <property type="evidence" value="ECO:0007669"/>
    <property type="project" value="UniProtKB-SubCell"/>
</dbReference>
<dbReference type="Gene3D" id="1.25.40.20">
    <property type="entry name" value="Ankyrin repeat-containing domain"/>
    <property type="match status" value="1"/>
</dbReference>
<dbReference type="InterPro" id="IPR050657">
    <property type="entry name" value="Ankyrin_repeat_domain"/>
</dbReference>
<dbReference type="InterPro" id="IPR002110">
    <property type="entry name" value="Ankyrin_rpt"/>
</dbReference>
<dbReference type="InterPro" id="IPR036770">
    <property type="entry name" value="Ankyrin_rpt-contain_sf"/>
</dbReference>
<dbReference type="InterPro" id="IPR039497">
    <property type="entry name" value="CC144C-like_CC_dom"/>
</dbReference>
<dbReference type="PANTHER" id="PTHR24147">
    <property type="entry name" value="ANKYRIN REPEAT DOMAIN 36-RELATED"/>
    <property type="match status" value="1"/>
</dbReference>
<dbReference type="PANTHER" id="PTHR24147:SF66">
    <property type="entry name" value="POTE ANKYRIN DOMAIN FAMILY MEMBER D"/>
    <property type="match status" value="1"/>
</dbReference>
<dbReference type="Pfam" id="PF12796">
    <property type="entry name" value="Ank_2"/>
    <property type="match status" value="2"/>
</dbReference>
<dbReference type="Pfam" id="PF14915">
    <property type="entry name" value="CCDC144C"/>
    <property type="match status" value="1"/>
</dbReference>
<dbReference type="PRINTS" id="PR01415">
    <property type="entry name" value="ANKYRIN"/>
</dbReference>
<dbReference type="SMART" id="SM00248">
    <property type="entry name" value="ANK"/>
    <property type="match status" value="6"/>
</dbReference>
<dbReference type="SUPFAM" id="SSF48403">
    <property type="entry name" value="Ankyrin repeat"/>
    <property type="match status" value="1"/>
</dbReference>
<dbReference type="PROSITE" id="PS50297">
    <property type="entry name" value="ANK_REP_REGION"/>
    <property type="match status" value="1"/>
</dbReference>
<dbReference type="PROSITE" id="PS50088">
    <property type="entry name" value="ANK_REPEAT"/>
    <property type="match status" value="5"/>
</dbReference>
<evidence type="ECO:0000255" key="1"/>
<evidence type="ECO:0000256" key="2">
    <source>
        <dbReference type="SAM" id="MobiDB-lite"/>
    </source>
</evidence>
<evidence type="ECO:0000269" key="3">
    <source>
    </source>
</evidence>
<evidence type="ECO:0000269" key="4">
    <source>
    </source>
</evidence>
<evidence type="ECO:0000269" key="5">
    <source>
    </source>
</evidence>
<evidence type="ECO:0000305" key="6"/>
<accession>Q86YR6</accession>
<accession>C9JCF7</accession>